<organism>
    <name type="scientific">Staphylococcus epidermidis (strain ATCC 35984 / DSM 28319 / BCRC 17069 / CCUG 31568 / BM 3577 / RP62A)</name>
    <dbReference type="NCBI Taxonomy" id="176279"/>
    <lineage>
        <taxon>Bacteria</taxon>
        <taxon>Bacillati</taxon>
        <taxon>Bacillota</taxon>
        <taxon>Bacilli</taxon>
        <taxon>Bacillales</taxon>
        <taxon>Staphylococcaceae</taxon>
        <taxon>Staphylococcus</taxon>
    </lineage>
</organism>
<gene>
    <name evidence="1" type="primary">topA</name>
    <name type="ordered locus">SERP0816</name>
</gene>
<keyword id="KW-0238">DNA-binding</keyword>
<keyword id="KW-0413">Isomerase</keyword>
<keyword id="KW-0460">Magnesium</keyword>
<keyword id="KW-0479">Metal-binding</keyword>
<keyword id="KW-1185">Reference proteome</keyword>
<keyword id="KW-0677">Repeat</keyword>
<keyword id="KW-0799">Topoisomerase</keyword>
<keyword id="KW-0862">Zinc</keyword>
<keyword id="KW-0863">Zinc-finger</keyword>
<reference key="1">
    <citation type="journal article" date="2005" name="J. Bacteriol.">
        <title>Insights on evolution of virulence and resistance from the complete genome analysis of an early methicillin-resistant Staphylococcus aureus strain and a biofilm-producing methicillin-resistant Staphylococcus epidermidis strain.</title>
        <authorList>
            <person name="Gill S.R."/>
            <person name="Fouts D.E."/>
            <person name="Archer G.L."/>
            <person name="Mongodin E.F."/>
            <person name="DeBoy R.T."/>
            <person name="Ravel J."/>
            <person name="Paulsen I.T."/>
            <person name="Kolonay J.F."/>
            <person name="Brinkac L.M."/>
            <person name="Beanan M.J."/>
            <person name="Dodson R.J."/>
            <person name="Daugherty S.C."/>
            <person name="Madupu R."/>
            <person name="Angiuoli S.V."/>
            <person name="Durkin A.S."/>
            <person name="Haft D.H."/>
            <person name="Vamathevan J.J."/>
            <person name="Khouri H."/>
            <person name="Utterback T.R."/>
            <person name="Lee C."/>
            <person name="Dimitrov G."/>
            <person name="Jiang L."/>
            <person name="Qin H."/>
            <person name="Weidman J."/>
            <person name="Tran K."/>
            <person name="Kang K.H."/>
            <person name="Hance I.R."/>
            <person name="Nelson K.E."/>
            <person name="Fraser C.M."/>
        </authorList>
    </citation>
    <scope>NUCLEOTIDE SEQUENCE [LARGE SCALE GENOMIC DNA]</scope>
    <source>
        <strain>ATCC 35984 / DSM 28319 / BCRC 17069 / CCUG 31568 / BM 3577 / RP62A</strain>
    </source>
</reference>
<protein>
    <recommendedName>
        <fullName evidence="1">DNA topoisomerase 1</fullName>
        <ecNumber evidence="1">5.6.2.1</ecNumber>
    </recommendedName>
    <alternativeName>
        <fullName evidence="1">DNA topoisomerase I</fullName>
    </alternativeName>
    <alternativeName>
        <fullName>Omega-protein</fullName>
    </alternativeName>
    <alternativeName>
        <fullName>Relaxing enzyme</fullName>
    </alternativeName>
    <alternativeName>
        <fullName>Swivelase</fullName>
    </alternativeName>
    <alternativeName>
        <fullName>Untwisting enzyme</fullName>
    </alternativeName>
</protein>
<sequence length="689" mass="79519">MADNLVIVESPAKAKTIEKYLGKRYKVIASMGHVRDLPRSQMGVDTEDNYEPKYITIRGKGPVVKDLKKHAKKAKKIFLASDPDREGEAIAWHLSKILELEDSKENRVVFNEITKDAVKDSFKHPRGIEMDLVDAQQARRILDRLVGYNISPVLWKKVKKGLSAGRVQSVALRLVIDRENEIRNFKPEEYWSIEGEFRYKKSKFTAKFLHYKNKPYKLNNKDDVQRITEALNGDQFEITNVNRKEKTRYPAHPFTTSTLQQEAARKLNFKARKTMMLAQQLYEGIDLKRQGTVGLITYMRTDSTRISTSAKSEAQQYINDKYGEQYVSQRKSSGKQGDQDAHEAIRPTSTMRTPDDMKAFLTRDQHRLYKLIWERFVASQMAPAILDTVALDVTQNDIKFRANGQTIKFKGFMTLYVEAKDDKENDKENKLPQLDKGDKVTATKIEPAQHFTQPPPRYTEARLVKTLEELKIGRPSTYAPTIDTIQKRNYVKLESKRFIPTELGEIVYEQVKEYFPEIIDVEFTVNMETLLDKIAEGDMNWRKVIGDFYNSFKQDVERAESEMEKIEIKDEPAGEDCEVCGSPMVIKMGRYGKFMACSNFPDCRNTKAIVKTIGVTCPKCNEGDVVERKSKKNRIFYGCSRYPECDFISWDKPVGRDCPKCHHYLVNKKKGKSSQVVCSNCDYEEEVQK</sequence>
<feature type="chain" id="PRO_0000285945" description="DNA topoisomerase 1">
    <location>
        <begin position="1"/>
        <end position="689"/>
    </location>
</feature>
<feature type="domain" description="Toprim" evidence="1">
    <location>
        <begin position="3"/>
        <end position="113"/>
    </location>
</feature>
<feature type="domain" description="Topo IA-type catalytic" evidence="2">
    <location>
        <begin position="129"/>
        <end position="557"/>
    </location>
</feature>
<feature type="zinc finger region" description="C4-type 1">
    <location>
        <begin position="577"/>
        <end position="603"/>
    </location>
</feature>
<feature type="zinc finger region" description="C4-type 2">
    <location>
        <begin position="617"/>
        <end position="645"/>
    </location>
</feature>
<feature type="zinc finger region" description="C4-type 3">
    <location>
        <begin position="658"/>
        <end position="681"/>
    </location>
</feature>
<feature type="region of interest" description="Interaction with DNA" evidence="1">
    <location>
        <begin position="163"/>
        <end position="168"/>
    </location>
</feature>
<feature type="active site" description="O-(5'-phospho-DNA)-tyrosine intermediate" evidence="2">
    <location>
        <position position="298"/>
    </location>
</feature>
<feature type="binding site" evidence="1">
    <location>
        <position position="9"/>
    </location>
    <ligand>
        <name>Mg(2+)</name>
        <dbReference type="ChEBI" id="CHEBI:18420"/>
        <note>catalytic</note>
    </ligand>
</feature>
<feature type="binding site" evidence="1">
    <location>
        <position position="82"/>
    </location>
    <ligand>
        <name>Mg(2+)</name>
        <dbReference type="ChEBI" id="CHEBI:18420"/>
        <note>catalytic</note>
    </ligand>
</feature>
<feature type="site" description="Interaction with DNA" evidence="1">
    <location>
        <position position="33"/>
    </location>
</feature>
<feature type="site" description="Interaction with DNA" evidence="1">
    <location>
        <position position="139"/>
    </location>
</feature>
<feature type="site" description="Interaction with DNA" evidence="1">
    <location>
        <position position="140"/>
    </location>
</feature>
<feature type="site" description="Interaction with DNA" evidence="1">
    <location>
        <position position="143"/>
    </location>
</feature>
<feature type="site" description="Interaction with DNA" evidence="1">
    <location>
        <position position="148"/>
    </location>
</feature>
<feature type="site" description="Interaction with DNA" evidence="1">
    <location>
        <position position="155"/>
    </location>
</feature>
<feature type="site" description="Interaction with DNA" evidence="1">
    <location>
        <position position="300"/>
    </location>
</feature>
<feature type="site" description="Interaction with DNA" evidence="1">
    <location>
        <position position="488"/>
    </location>
</feature>
<proteinExistence type="inferred from homology"/>
<name>TOP1_STAEQ</name>
<evidence type="ECO:0000255" key="1">
    <source>
        <dbReference type="HAMAP-Rule" id="MF_00952"/>
    </source>
</evidence>
<evidence type="ECO:0000255" key="2">
    <source>
        <dbReference type="PROSITE-ProRule" id="PRU01383"/>
    </source>
</evidence>
<comment type="function">
    <text evidence="1">Releases the supercoiling and torsional tension of DNA, which is introduced during the DNA replication and transcription, by transiently cleaving and rejoining one strand of the DNA duplex. Introduces a single-strand break via transesterification at a target site in duplex DNA. The scissile phosphodiester is attacked by the catalytic tyrosine of the enzyme, resulting in the formation of a DNA-(5'-phosphotyrosyl)-enzyme intermediate and the expulsion of a 3'-OH DNA strand. The free DNA strand then undergoes passage around the unbroken strand, thus removing DNA supercoils. Finally, in the religation step, the DNA 3'-OH attacks the covalent intermediate to expel the active-site tyrosine and restore the DNA phosphodiester backbone.</text>
</comment>
<comment type="catalytic activity">
    <reaction evidence="1">
        <text>ATP-independent breakage of single-stranded DNA, followed by passage and rejoining.</text>
        <dbReference type="EC" id="5.6.2.1"/>
    </reaction>
</comment>
<comment type="cofactor">
    <cofactor evidence="1">
        <name>Mg(2+)</name>
        <dbReference type="ChEBI" id="CHEBI:18420"/>
    </cofactor>
</comment>
<comment type="subunit">
    <text evidence="1">Monomer.</text>
</comment>
<comment type="similarity">
    <text evidence="1">Belongs to the type IA topoisomerase family.</text>
</comment>
<dbReference type="EC" id="5.6.2.1" evidence="1"/>
<dbReference type="EMBL" id="CP000029">
    <property type="protein sequence ID" value="AAW54162.1"/>
    <property type="molecule type" value="Genomic_DNA"/>
</dbReference>
<dbReference type="RefSeq" id="WP_001829508.1">
    <property type="nucleotide sequence ID" value="NC_002976.3"/>
</dbReference>
<dbReference type="SMR" id="Q5HPU2"/>
<dbReference type="STRING" id="176279.SERP0816"/>
<dbReference type="KEGG" id="ser:SERP0816"/>
<dbReference type="eggNOG" id="COG0550">
    <property type="taxonomic scope" value="Bacteria"/>
</dbReference>
<dbReference type="HOGENOM" id="CLU_002929_4_3_9"/>
<dbReference type="Proteomes" id="UP000000531">
    <property type="component" value="Chromosome"/>
</dbReference>
<dbReference type="GO" id="GO:0005694">
    <property type="term" value="C:chromosome"/>
    <property type="evidence" value="ECO:0007669"/>
    <property type="project" value="InterPro"/>
</dbReference>
<dbReference type="GO" id="GO:0003677">
    <property type="term" value="F:DNA binding"/>
    <property type="evidence" value="ECO:0007669"/>
    <property type="project" value="UniProtKB-KW"/>
</dbReference>
<dbReference type="GO" id="GO:0003917">
    <property type="term" value="F:DNA topoisomerase type I (single strand cut, ATP-independent) activity"/>
    <property type="evidence" value="ECO:0007669"/>
    <property type="project" value="UniProtKB-UniRule"/>
</dbReference>
<dbReference type="GO" id="GO:0008270">
    <property type="term" value="F:zinc ion binding"/>
    <property type="evidence" value="ECO:0007669"/>
    <property type="project" value="UniProtKB-KW"/>
</dbReference>
<dbReference type="GO" id="GO:0006265">
    <property type="term" value="P:DNA topological change"/>
    <property type="evidence" value="ECO:0007669"/>
    <property type="project" value="UniProtKB-UniRule"/>
</dbReference>
<dbReference type="CDD" id="cd00186">
    <property type="entry name" value="TOP1Ac"/>
    <property type="match status" value="1"/>
</dbReference>
<dbReference type="CDD" id="cd03363">
    <property type="entry name" value="TOPRIM_TopoIA_TopoI"/>
    <property type="match status" value="1"/>
</dbReference>
<dbReference type="Gene3D" id="3.40.50.140">
    <property type="match status" value="1"/>
</dbReference>
<dbReference type="Gene3D" id="3.30.65.10">
    <property type="entry name" value="Bacterial Topoisomerase I, domain 1"/>
    <property type="match status" value="2"/>
</dbReference>
<dbReference type="Gene3D" id="1.10.460.10">
    <property type="entry name" value="Topoisomerase I, domain 2"/>
    <property type="match status" value="1"/>
</dbReference>
<dbReference type="Gene3D" id="2.70.20.10">
    <property type="entry name" value="Topoisomerase I, domain 3"/>
    <property type="match status" value="1"/>
</dbReference>
<dbReference type="Gene3D" id="1.10.290.10">
    <property type="entry name" value="Topoisomerase I, domain 4"/>
    <property type="match status" value="1"/>
</dbReference>
<dbReference type="HAMAP" id="MF_00952">
    <property type="entry name" value="Topoisom_1_prok"/>
    <property type="match status" value="1"/>
</dbReference>
<dbReference type="InterPro" id="IPR000380">
    <property type="entry name" value="Topo_IA"/>
</dbReference>
<dbReference type="InterPro" id="IPR003601">
    <property type="entry name" value="Topo_IA_2"/>
</dbReference>
<dbReference type="InterPro" id="IPR023406">
    <property type="entry name" value="Topo_IA_AS"/>
</dbReference>
<dbReference type="InterPro" id="IPR013497">
    <property type="entry name" value="Topo_IA_cen"/>
</dbReference>
<dbReference type="InterPro" id="IPR013824">
    <property type="entry name" value="Topo_IA_cen_sub1"/>
</dbReference>
<dbReference type="InterPro" id="IPR013825">
    <property type="entry name" value="Topo_IA_cen_sub2"/>
</dbReference>
<dbReference type="InterPro" id="IPR013826">
    <property type="entry name" value="Topo_IA_cen_sub3"/>
</dbReference>
<dbReference type="InterPro" id="IPR023405">
    <property type="entry name" value="Topo_IA_core_domain"/>
</dbReference>
<dbReference type="InterPro" id="IPR003602">
    <property type="entry name" value="Topo_IA_DNA-bd_dom"/>
</dbReference>
<dbReference type="InterPro" id="IPR013498">
    <property type="entry name" value="Topo_IA_Znf"/>
</dbReference>
<dbReference type="InterPro" id="IPR005733">
    <property type="entry name" value="TopoI_bac-type"/>
</dbReference>
<dbReference type="InterPro" id="IPR028612">
    <property type="entry name" value="Topoisom_1_IA"/>
</dbReference>
<dbReference type="InterPro" id="IPR006171">
    <property type="entry name" value="TOPRIM_dom"/>
</dbReference>
<dbReference type="InterPro" id="IPR034149">
    <property type="entry name" value="TOPRIM_TopoI"/>
</dbReference>
<dbReference type="NCBIfam" id="TIGR01051">
    <property type="entry name" value="topA_bact"/>
    <property type="match status" value="1"/>
</dbReference>
<dbReference type="PANTHER" id="PTHR42785:SF1">
    <property type="entry name" value="DNA TOPOISOMERASE"/>
    <property type="match status" value="1"/>
</dbReference>
<dbReference type="PANTHER" id="PTHR42785">
    <property type="entry name" value="DNA TOPOISOMERASE, TYPE IA, CORE"/>
    <property type="match status" value="1"/>
</dbReference>
<dbReference type="Pfam" id="PF01131">
    <property type="entry name" value="Topoisom_bac"/>
    <property type="match status" value="1"/>
</dbReference>
<dbReference type="Pfam" id="PF01751">
    <property type="entry name" value="Toprim"/>
    <property type="match status" value="1"/>
</dbReference>
<dbReference type="Pfam" id="PF01396">
    <property type="entry name" value="Zn_ribbon_Top1"/>
    <property type="match status" value="3"/>
</dbReference>
<dbReference type="PRINTS" id="PR00417">
    <property type="entry name" value="PRTPISMRASEI"/>
</dbReference>
<dbReference type="SMART" id="SM00437">
    <property type="entry name" value="TOP1Ac"/>
    <property type="match status" value="1"/>
</dbReference>
<dbReference type="SMART" id="SM00436">
    <property type="entry name" value="TOP1Bc"/>
    <property type="match status" value="1"/>
</dbReference>
<dbReference type="SMART" id="SM00493">
    <property type="entry name" value="TOPRIM"/>
    <property type="match status" value="1"/>
</dbReference>
<dbReference type="SUPFAM" id="SSF56712">
    <property type="entry name" value="Prokaryotic type I DNA topoisomerase"/>
    <property type="match status" value="1"/>
</dbReference>
<dbReference type="PROSITE" id="PS00396">
    <property type="entry name" value="TOPO_IA_1"/>
    <property type="match status" value="1"/>
</dbReference>
<dbReference type="PROSITE" id="PS52039">
    <property type="entry name" value="TOPO_IA_2"/>
    <property type="match status" value="1"/>
</dbReference>
<dbReference type="PROSITE" id="PS50880">
    <property type="entry name" value="TOPRIM"/>
    <property type="match status" value="1"/>
</dbReference>
<accession>Q5HPU2</accession>